<protein>
    <recommendedName>
        <fullName>Cytochrome f</fullName>
    </recommendedName>
</protein>
<keyword id="KW-0150">Chloroplast</keyword>
<keyword id="KW-0249">Electron transport</keyword>
<keyword id="KW-0349">Heme</keyword>
<keyword id="KW-0408">Iron</keyword>
<keyword id="KW-0472">Membrane</keyword>
<keyword id="KW-0479">Metal-binding</keyword>
<keyword id="KW-0602">Photosynthesis</keyword>
<keyword id="KW-0934">Plastid</keyword>
<keyword id="KW-0732">Signal</keyword>
<keyword id="KW-0793">Thylakoid</keyword>
<keyword id="KW-0812">Transmembrane</keyword>
<keyword id="KW-1133">Transmembrane helix</keyword>
<keyword id="KW-0813">Transport</keyword>
<sequence>MRTFLKFSTLVSKGVLVLVCSFFLTASSNAYPIFAQQNYANPREANGRIVCANCHLAEKPIEIEVPQAVLPDTVFEAVVKIPYDKQIKQVLANGKKGDLNVGAVLILPDGFEIAPPDRIPEEMKAKVGKLYFQPYSAEKKTIFVVGPVPGKKYSEMVFPILSPDPAKTKSISYLKYPIYVGGNRGRGQVYPDGSKSNNTIFTASAAGKITAIEPAGKKGGYTLTIETANGESISEKLPPGPELVVNIGDIVGVDQALTTNPNVGGFGQGETEVVLQNPLRIQGLLVFFLFVLLAQVFLVLKKKQFEKVQLAEMNF</sequence>
<geneLocation type="chloroplast"/>
<feature type="signal peptide" evidence="1">
    <location>
        <begin position="1"/>
        <end position="30"/>
    </location>
</feature>
<feature type="chain" id="PRO_0000023811" description="Cytochrome f">
    <location>
        <begin position="31"/>
        <end position="315"/>
    </location>
</feature>
<feature type="transmembrane region" description="Helical" evidence="2">
    <location>
        <begin position="281"/>
        <end position="300"/>
    </location>
</feature>
<feature type="binding site" description="axial binding residue" evidence="1">
    <location>
        <position position="31"/>
    </location>
    <ligand>
        <name>heme</name>
        <dbReference type="ChEBI" id="CHEBI:30413"/>
    </ligand>
    <ligandPart>
        <name>Fe</name>
        <dbReference type="ChEBI" id="CHEBI:18248"/>
    </ligandPart>
</feature>
<feature type="binding site" description="covalent" evidence="1">
    <location>
        <position position="51"/>
    </location>
    <ligand>
        <name>heme</name>
        <dbReference type="ChEBI" id="CHEBI:30413"/>
    </ligand>
</feature>
<feature type="binding site" description="covalent" evidence="1">
    <location>
        <position position="54"/>
    </location>
    <ligand>
        <name>heme</name>
        <dbReference type="ChEBI" id="CHEBI:30413"/>
    </ligand>
</feature>
<feature type="binding site" description="axial binding residue" evidence="1">
    <location>
        <position position="55"/>
    </location>
    <ligand>
        <name>heme</name>
        <dbReference type="ChEBI" id="CHEBI:30413"/>
    </ligand>
    <ligandPart>
        <name>Fe</name>
        <dbReference type="ChEBI" id="CHEBI:18248"/>
    </ligandPart>
</feature>
<proteinExistence type="inferred from homology"/>
<evidence type="ECO:0000250" key="1"/>
<evidence type="ECO:0000255" key="2"/>
<evidence type="ECO:0000305" key="3"/>
<comment type="function">
    <text evidence="1">Component of the cytochrome b6-f complex, which mediates electron transfer between photosystem II (PSII) and photosystem I (PSI), cyclic electron flow around PSI, and state transitions.</text>
</comment>
<comment type="cofactor">
    <cofactor evidence="1">
        <name>heme</name>
        <dbReference type="ChEBI" id="CHEBI:30413"/>
    </cofactor>
    <text evidence="1">Binds 1 heme group covalently.</text>
</comment>
<comment type="subunit">
    <text evidence="1">The 4 large subunits of the cytochrome b6-f complex are cytochrome b6, subunit IV (17 kDa polypeptide, petD), cytochrome f and the Rieske protein, while the 4 small subunits are PetG, PetL, PetM and PetN. The complex functions as a dimer (By similarity).</text>
</comment>
<comment type="subcellular location">
    <subcellularLocation>
        <location evidence="1">Plastid</location>
        <location evidence="1">Chloroplast thylakoid membrane</location>
        <topology evidence="1">Single-pass membrane protein</topology>
    </subcellularLocation>
</comment>
<comment type="similarity">
    <text evidence="3">Belongs to the cytochrome f family.</text>
</comment>
<comment type="sequence caution" evidence="3">
    <conflict type="frameshift">
        <sequence resource="EMBL-CDS" id="BAA57987"/>
    </conflict>
</comment>
<accession>P56316</accession>
<gene>
    <name type="primary">petA</name>
</gene>
<organism>
    <name type="scientific">Chlorella vulgaris</name>
    <name type="common">Green alga</name>
    <dbReference type="NCBI Taxonomy" id="3077"/>
    <lineage>
        <taxon>Eukaryota</taxon>
        <taxon>Viridiplantae</taxon>
        <taxon>Chlorophyta</taxon>
        <taxon>core chlorophytes</taxon>
        <taxon>Trebouxiophyceae</taxon>
        <taxon>Chlorellales</taxon>
        <taxon>Chlorellaceae</taxon>
        <taxon>Chlorella clade</taxon>
        <taxon>Chlorella</taxon>
    </lineage>
</organism>
<name>CYF_CHLVU</name>
<dbReference type="EMBL" id="AB001684">
    <property type="protein sequence ID" value="BAA57987.1"/>
    <property type="status" value="ALT_FRAME"/>
    <property type="molecule type" value="Genomic_DNA"/>
</dbReference>
<dbReference type="PIR" id="T07339">
    <property type="entry name" value="T07339"/>
</dbReference>
<dbReference type="RefSeq" id="NP_045911.2">
    <property type="nucleotide sequence ID" value="NC_001865.1"/>
</dbReference>
<dbReference type="SMR" id="P56316"/>
<dbReference type="GeneID" id="809200"/>
<dbReference type="GO" id="GO:0009535">
    <property type="term" value="C:chloroplast thylakoid membrane"/>
    <property type="evidence" value="ECO:0007669"/>
    <property type="project" value="UniProtKB-SubCell"/>
</dbReference>
<dbReference type="GO" id="GO:0009055">
    <property type="term" value="F:electron transfer activity"/>
    <property type="evidence" value="ECO:0007669"/>
    <property type="project" value="UniProtKB-UniRule"/>
</dbReference>
<dbReference type="GO" id="GO:0020037">
    <property type="term" value="F:heme binding"/>
    <property type="evidence" value="ECO:0007669"/>
    <property type="project" value="InterPro"/>
</dbReference>
<dbReference type="GO" id="GO:0005506">
    <property type="term" value="F:iron ion binding"/>
    <property type="evidence" value="ECO:0007669"/>
    <property type="project" value="InterPro"/>
</dbReference>
<dbReference type="GO" id="GO:0015979">
    <property type="term" value="P:photosynthesis"/>
    <property type="evidence" value="ECO:0007669"/>
    <property type="project" value="UniProtKB-UniRule"/>
</dbReference>
<dbReference type="FunFam" id="1.20.5.700:FF:000001">
    <property type="entry name" value="Cytochrome f"/>
    <property type="match status" value="1"/>
</dbReference>
<dbReference type="FunFam" id="2.60.40.830:FF:000001">
    <property type="entry name" value="Cytochrome f"/>
    <property type="match status" value="1"/>
</dbReference>
<dbReference type="Gene3D" id="2.40.50.100">
    <property type="match status" value="1"/>
</dbReference>
<dbReference type="Gene3D" id="2.60.40.830">
    <property type="entry name" value="Cytochrome f large domain"/>
    <property type="match status" value="1"/>
</dbReference>
<dbReference type="Gene3D" id="1.20.5.700">
    <property type="entry name" value="Single helix bin"/>
    <property type="match status" value="1"/>
</dbReference>
<dbReference type="HAMAP" id="MF_00610">
    <property type="entry name" value="Cytb6_f_cytF"/>
    <property type="match status" value="1"/>
</dbReference>
<dbReference type="InterPro" id="IPR024058">
    <property type="entry name" value="Cyt-f_TM"/>
</dbReference>
<dbReference type="InterPro" id="IPR002325">
    <property type="entry name" value="Cyt_f"/>
</dbReference>
<dbReference type="InterPro" id="IPR024094">
    <property type="entry name" value="Cyt_f_lg_dom"/>
</dbReference>
<dbReference type="InterPro" id="IPR036826">
    <property type="entry name" value="Cyt_f_lg_dom_sf"/>
</dbReference>
<dbReference type="InterPro" id="IPR011054">
    <property type="entry name" value="Rudment_hybrid_motif"/>
</dbReference>
<dbReference type="PANTHER" id="PTHR33288">
    <property type="match status" value="1"/>
</dbReference>
<dbReference type="PANTHER" id="PTHR33288:SF10">
    <property type="entry name" value="CYTOCHROME F"/>
    <property type="match status" value="1"/>
</dbReference>
<dbReference type="Pfam" id="PF01333">
    <property type="entry name" value="Apocytochr_F_C"/>
    <property type="match status" value="1"/>
</dbReference>
<dbReference type="Pfam" id="PF16639">
    <property type="entry name" value="Apocytochr_F_N"/>
    <property type="match status" value="1"/>
</dbReference>
<dbReference type="PRINTS" id="PR00610">
    <property type="entry name" value="CYTOCHROMEF"/>
</dbReference>
<dbReference type="SUPFAM" id="SSF103431">
    <property type="entry name" value="Cytochrome f subunit of the cytochrome b6f complex, transmembrane anchor"/>
    <property type="match status" value="1"/>
</dbReference>
<dbReference type="SUPFAM" id="SSF49441">
    <property type="entry name" value="Cytochrome f, large domain"/>
    <property type="match status" value="1"/>
</dbReference>
<dbReference type="SUPFAM" id="SSF51246">
    <property type="entry name" value="Rudiment single hybrid motif"/>
    <property type="match status" value="1"/>
</dbReference>
<dbReference type="PROSITE" id="PS51010">
    <property type="entry name" value="CYTF"/>
    <property type="match status" value="1"/>
</dbReference>
<reference key="1">
    <citation type="journal article" date="1997" name="Proc. Natl. Acad. Sci. U.S.A.">
        <title>Complete nucleotide sequence of the chloroplast genome from the green alga Chlorella vulgaris: the existence of genes possibly involved in chloroplast division.</title>
        <authorList>
            <person name="Wakasugi T."/>
            <person name="Nagai T."/>
            <person name="Kapoor M."/>
            <person name="Sugita M."/>
            <person name="Ito M."/>
            <person name="Ito S."/>
            <person name="Tsudzuki J."/>
            <person name="Nakashima K."/>
            <person name="Tsudzuki T."/>
            <person name="Suzuki Y."/>
            <person name="Hamada A."/>
            <person name="Ohta T."/>
            <person name="Inamura A."/>
            <person name="Yoshinaga K."/>
            <person name="Sugiura M."/>
        </authorList>
    </citation>
    <scope>NUCLEOTIDE SEQUENCE [LARGE SCALE GENOMIC DNA]</scope>
    <source>
        <strain>IAM C-27 / Tamiya</strain>
    </source>
</reference>